<sequence length="481" mass="52309">MSAASLKVTTTSRPGSRLAVEVAVPAERSQASYEEAITRLSRSVNLPGFRKGKVPRTVLVQQLGALRIRATALESLVESVWRDALAQETIEALGQPELSGSFEELLDTFKPGEALTVTMETDVAPSPTLKSTKGLKAEAETVAFDAAKVDEMLEQSRRQLATVVPVEGRKAEQGDIAVVGFKGTYSDDGSEIEGGSADSMDVDLEHGRMIPGFVEGVVGMAVGDSKTVDCTFPEDYPKEDARGRKASFAIELKDLKTRELPELDDAFAKQASEQETLAELRSDLEQRLKDDAERRSRSNRHDALLAALVEQLEVELPESLIQQEVRNLVEQTAGQFAQQGMDVQSLFTPELVRNLMESSRPEAEERLRRSLALTALAESEKLSVDDADLNAKLKEVKGQLSGERDIDPERLRQAVLDDLLQEKLLGWLEENSTVTEKAPEAESDAAKASKPAAAKKDASKAKTAKTSKAKTAKAESESAES</sequence>
<protein>
    <recommendedName>
        <fullName evidence="1">Trigger factor</fullName>
        <shortName evidence="1">TF</shortName>
        <ecNumber evidence="1">5.2.1.8</ecNumber>
    </recommendedName>
    <alternativeName>
        <fullName evidence="1">PPIase</fullName>
    </alternativeName>
</protein>
<name>TIG_SYNPW</name>
<proteinExistence type="inferred from homology"/>
<comment type="function">
    <text evidence="1">Involved in protein export. Acts as a chaperone by maintaining the newly synthesized protein in an open conformation. Functions as a peptidyl-prolyl cis-trans isomerase.</text>
</comment>
<comment type="catalytic activity">
    <reaction evidence="1">
        <text>[protein]-peptidylproline (omega=180) = [protein]-peptidylproline (omega=0)</text>
        <dbReference type="Rhea" id="RHEA:16237"/>
        <dbReference type="Rhea" id="RHEA-COMP:10747"/>
        <dbReference type="Rhea" id="RHEA-COMP:10748"/>
        <dbReference type="ChEBI" id="CHEBI:83833"/>
        <dbReference type="ChEBI" id="CHEBI:83834"/>
        <dbReference type="EC" id="5.2.1.8"/>
    </reaction>
</comment>
<comment type="subcellular location">
    <subcellularLocation>
        <location>Cytoplasm</location>
    </subcellularLocation>
    <text evidence="1">About half TF is bound to the ribosome near the polypeptide exit tunnel while the other half is free in the cytoplasm.</text>
</comment>
<comment type="domain">
    <text evidence="1">Consists of 3 domains; the N-terminus binds the ribosome, the middle domain has PPIase activity, while the C-terminus has intrinsic chaperone activity on its own.</text>
</comment>
<comment type="similarity">
    <text evidence="1">Belongs to the FKBP-type PPIase family. Tig subfamily.</text>
</comment>
<reference key="1">
    <citation type="submission" date="2006-05" db="EMBL/GenBank/DDBJ databases">
        <authorList>
            <consortium name="Genoscope"/>
        </authorList>
    </citation>
    <scope>NUCLEOTIDE SEQUENCE [LARGE SCALE GENOMIC DNA]</scope>
    <source>
        <strain>WH7803</strain>
    </source>
</reference>
<accession>A5GHT2</accession>
<gene>
    <name evidence="1" type="primary">tig</name>
    <name type="ordered locus">SynWH7803_0071</name>
</gene>
<feature type="chain" id="PRO_1000022774" description="Trigger factor">
    <location>
        <begin position="1"/>
        <end position="481"/>
    </location>
</feature>
<feature type="domain" description="PPIase FKBP-type" evidence="1">
    <location>
        <begin position="174"/>
        <end position="261"/>
    </location>
</feature>
<feature type="region of interest" description="Disordered" evidence="2">
    <location>
        <begin position="430"/>
        <end position="481"/>
    </location>
</feature>
<feature type="compositionally biased region" description="Basic and acidic residues" evidence="2">
    <location>
        <begin position="437"/>
        <end position="447"/>
    </location>
</feature>
<feature type="compositionally biased region" description="Basic residues" evidence="2">
    <location>
        <begin position="462"/>
        <end position="471"/>
    </location>
</feature>
<feature type="compositionally biased region" description="Basic and acidic residues" evidence="2">
    <location>
        <begin position="472"/>
        <end position="481"/>
    </location>
</feature>
<keyword id="KW-0131">Cell cycle</keyword>
<keyword id="KW-0132">Cell division</keyword>
<keyword id="KW-0143">Chaperone</keyword>
<keyword id="KW-0963">Cytoplasm</keyword>
<keyword id="KW-0413">Isomerase</keyword>
<keyword id="KW-1185">Reference proteome</keyword>
<keyword id="KW-0697">Rotamase</keyword>
<dbReference type="EC" id="5.2.1.8" evidence="1"/>
<dbReference type="EMBL" id="CT971583">
    <property type="protein sequence ID" value="CAK22497.1"/>
    <property type="molecule type" value="Genomic_DNA"/>
</dbReference>
<dbReference type="SMR" id="A5GHT2"/>
<dbReference type="STRING" id="32051.SynWH7803_0071"/>
<dbReference type="KEGG" id="syx:SynWH7803_0071"/>
<dbReference type="eggNOG" id="COG0544">
    <property type="taxonomic scope" value="Bacteria"/>
</dbReference>
<dbReference type="HOGENOM" id="CLU_033058_3_1_3"/>
<dbReference type="OrthoDB" id="9767721at2"/>
<dbReference type="Proteomes" id="UP000001566">
    <property type="component" value="Chromosome"/>
</dbReference>
<dbReference type="GO" id="GO:0005737">
    <property type="term" value="C:cytoplasm"/>
    <property type="evidence" value="ECO:0007669"/>
    <property type="project" value="UniProtKB-SubCell"/>
</dbReference>
<dbReference type="GO" id="GO:0003755">
    <property type="term" value="F:peptidyl-prolyl cis-trans isomerase activity"/>
    <property type="evidence" value="ECO:0007669"/>
    <property type="project" value="UniProtKB-UniRule"/>
</dbReference>
<dbReference type="GO" id="GO:0044183">
    <property type="term" value="F:protein folding chaperone"/>
    <property type="evidence" value="ECO:0007669"/>
    <property type="project" value="TreeGrafter"/>
</dbReference>
<dbReference type="GO" id="GO:0043022">
    <property type="term" value="F:ribosome binding"/>
    <property type="evidence" value="ECO:0007669"/>
    <property type="project" value="TreeGrafter"/>
</dbReference>
<dbReference type="GO" id="GO:0051083">
    <property type="term" value="P:'de novo' cotranslational protein folding"/>
    <property type="evidence" value="ECO:0007669"/>
    <property type="project" value="TreeGrafter"/>
</dbReference>
<dbReference type="GO" id="GO:0051301">
    <property type="term" value="P:cell division"/>
    <property type="evidence" value="ECO:0007669"/>
    <property type="project" value="UniProtKB-KW"/>
</dbReference>
<dbReference type="GO" id="GO:0061077">
    <property type="term" value="P:chaperone-mediated protein folding"/>
    <property type="evidence" value="ECO:0007669"/>
    <property type="project" value="TreeGrafter"/>
</dbReference>
<dbReference type="GO" id="GO:0015031">
    <property type="term" value="P:protein transport"/>
    <property type="evidence" value="ECO:0007669"/>
    <property type="project" value="UniProtKB-UniRule"/>
</dbReference>
<dbReference type="GO" id="GO:0043335">
    <property type="term" value="P:protein unfolding"/>
    <property type="evidence" value="ECO:0007669"/>
    <property type="project" value="TreeGrafter"/>
</dbReference>
<dbReference type="FunFam" id="3.10.50.40:FF:000001">
    <property type="entry name" value="Trigger factor"/>
    <property type="match status" value="1"/>
</dbReference>
<dbReference type="FunFam" id="3.30.70.1050:FF:000004">
    <property type="entry name" value="Trigger factor"/>
    <property type="match status" value="1"/>
</dbReference>
<dbReference type="Gene3D" id="3.10.50.40">
    <property type="match status" value="1"/>
</dbReference>
<dbReference type="Gene3D" id="3.30.70.1050">
    <property type="entry name" value="Trigger factor ribosome-binding domain"/>
    <property type="match status" value="1"/>
</dbReference>
<dbReference type="Gene3D" id="1.10.3120.10">
    <property type="entry name" value="Trigger factor, C-terminal domain"/>
    <property type="match status" value="1"/>
</dbReference>
<dbReference type="HAMAP" id="MF_00303">
    <property type="entry name" value="Trigger_factor_Tig"/>
    <property type="match status" value="1"/>
</dbReference>
<dbReference type="InterPro" id="IPR046357">
    <property type="entry name" value="PPIase_dom_sf"/>
</dbReference>
<dbReference type="InterPro" id="IPR001179">
    <property type="entry name" value="PPIase_FKBP_dom"/>
</dbReference>
<dbReference type="InterPro" id="IPR005215">
    <property type="entry name" value="Trig_fac"/>
</dbReference>
<dbReference type="InterPro" id="IPR008880">
    <property type="entry name" value="Trigger_fac_C"/>
</dbReference>
<dbReference type="InterPro" id="IPR037041">
    <property type="entry name" value="Trigger_fac_C_sf"/>
</dbReference>
<dbReference type="InterPro" id="IPR008881">
    <property type="entry name" value="Trigger_fac_ribosome-bd_bac"/>
</dbReference>
<dbReference type="InterPro" id="IPR036611">
    <property type="entry name" value="Trigger_fac_ribosome-bd_sf"/>
</dbReference>
<dbReference type="InterPro" id="IPR027304">
    <property type="entry name" value="Trigger_fact/SurA_dom_sf"/>
</dbReference>
<dbReference type="NCBIfam" id="TIGR00115">
    <property type="entry name" value="tig"/>
    <property type="match status" value="1"/>
</dbReference>
<dbReference type="PANTHER" id="PTHR30560">
    <property type="entry name" value="TRIGGER FACTOR CHAPERONE AND PEPTIDYL-PROLYL CIS/TRANS ISOMERASE"/>
    <property type="match status" value="1"/>
</dbReference>
<dbReference type="PANTHER" id="PTHR30560:SF3">
    <property type="entry name" value="TRIGGER FACTOR-LIKE PROTEIN TIG, CHLOROPLASTIC"/>
    <property type="match status" value="1"/>
</dbReference>
<dbReference type="Pfam" id="PF00254">
    <property type="entry name" value="FKBP_C"/>
    <property type="match status" value="1"/>
</dbReference>
<dbReference type="Pfam" id="PF05698">
    <property type="entry name" value="Trigger_C"/>
    <property type="match status" value="1"/>
</dbReference>
<dbReference type="Pfam" id="PF05697">
    <property type="entry name" value="Trigger_N"/>
    <property type="match status" value="1"/>
</dbReference>
<dbReference type="PIRSF" id="PIRSF003095">
    <property type="entry name" value="Trigger_factor"/>
    <property type="match status" value="1"/>
</dbReference>
<dbReference type="SUPFAM" id="SSF54534">
    <property type="entry name" value="FKBP-like"/>
    <property type="match status" value="1"/>
</dbReference>
<dbReference type="SUPFAM" id="SSF109998">
    <property type="entry name" value="Triger factor/SurA peptide-binding domain-like"/>
    <property type="match status" value="1"/>
</dbReference>
<dbReference type="SUPFAM" id="SSF102735">
    <property type="entry name" value="Trigger factor ribosome-binding domain"/>
    <property type="match status" value="1"/>
</dbReference>
<dbReference type="PROSITE" id="PS50059">
    <property type="entry name" value="FKBP_PPIASE"/>
    <property type="match status" value="1"/>
</dbReference>
<organism>
    <name type="scientific">Synechococcus sp. (strain WH7803)</name>
    <dbReference type="NCBI Taxonomy" id="32051"/>
    <lineage>
        <taxon>Bacteria</taxon>
        <taxon>Bacillati</taxon>
        <taxon>Cyanobacteriota</taxon>
        <taxon>Cyanophyceae</taxon>
        <taxon>Synechococcales</taxon>
        <taxon>Synechococcaceae</taxon>
        <taxon>Synechococcus</taxon>
    </lineage>
</organism>
<evidence type="ECO:0000255" key="1">
    <source>
        <dbReference type="HAMAP-Rule" id="MF_00303"/>
    </source>
</evidence>
<evidence type="ECO:0000256" key="2">
    <source>
        <dbReference type="SAM" id="MobiDB-lite"/>
    </source>
</evidence>